<sequence>MRFNQYSYINFPKENVLSELKKCGFDLQNTANHKDSLETFLRRFFFTYQDTNYPLSILAADKKTDLLTFFQSEDELTADIFYTVAFQLLGFSYLVDFEDSDVFRKETGFPIIYGDLIENLYQLLNTRTKKGNTLIDQLVSDGLIPEDNDYHYFNGKSLATFSNQDVIREVVYVESRVDTDQKGLSDLVKVSIIRPRFDGKIPAIMTASPYHQGTNDKASDKALYKMEGELEVKLPHKIELEKPQLNLVQPQGKAELIAEAEEKLTHINSSYTLNDYFLPRGFANLYVSGVGTKDSTGFMTNGDYQQIEAYKNVIDWLNGRCRAFTDHTRQRQVKADWSNGKVATTGLSYLGTMSNGLATTGVDGLEVIIAEAGISSWYNYYRENGLVTSPGGYPGEDFDSLAELTYSRNLLAGDYIRGNEAHQADLEKVKAQLDRKTGDYNQFWHDRNYLLNAHKVKAEVVFTHGSQDWNVKPLHVYQMFHALPTHINKHLFFHNGAHVYMNNWQSIDFRESINALLTKKLLGQETDFQLPTVIWQDNTAPQTWLSLDNFGGQENCETFSLGQEEQAIQNQYPDKDFERYGKTYQTFNTELYQGKANQITINLPVTKDLHLNGRAQLNLRIKSSTNKGLLSAQLLEFGQKKYLQPYPAILSARTIDNGRYHMLENLCELPFRPEAQRVVTKGYLNLQNRNDLLLVEDITADEWMDVQFELQPTIYKLKEGDTLRLVLYTTDFEITIRDNTDYHLTVDLAQSMLTLPC</sequence>
<organism>
    <name type="scientific">Streptococcus pneumoniae (strain ATCC BAA-255 / R6)</name>
    <dbReference type="NCBI Taxonomy" id="171101"/>
    <lineage>
        <taxon>Bacteria</taxon>
        <taxon>Bacillati</taxon>
        <taxon>Bacillota</taxon>
        <taxon>Bacilli</taxon>
        <taxon>Lactobacillales</taxon>
        <taxon>Streptococcaceae</taxon>
        <taxon>Streptococcus</taxon>
    </lineage>
</organism>
<name>PEPX_STRR6</name>
<dbReference type="EC" id="3.4.14.11" evidence="1"/>
<dbReference type="EMBL" id="AE007317">
    <property type="protein sequence ID" value="AAK99598.1"/>
    <property type="status" value="ALT_INIT"/>
    <property type="molecule type" value="Genomic_DNA"/>
</dbReference>
<dbReference type="PIR" id="B97971">
    <property type="entry name" value="B97971"/>
</dbReference>
<dbReference type="RefSeq" id="NP_358388.1">
    <property type="nucleotide sequence ID" value="NC_003098.1"/>
</dbReference>
<dbReference type="RefSeq" id="WP_001212040.1">
    <property type="nucleotide sequence ID" value="NC_003098.1"/>
</dbReference>
<dbReference type="SMR" id="Q8DQ87"/>
<dbReference type="STRING" id="171101.spr0794"/>
<dbReference type="ESTHER" id="strpn-pepx">
    <property type="family name" value="Lactobacillus_peptidase"/>
</dbReference>
<dbReference type="MEROPS" id="S15.001"/>
<dbReference type="KEGG" id="spr:spr0794"/>
<dbReference type="PATRIC" id="fig|171101.6.peg.881"/>
<dbReference type="eggNOG" id="COG2936">
    <property type="taxonomic scope" value="Bacteria"/>
</dbReference>
<dbReference type="HOGENOM" id="CLU_011800_0_0_9"/>
<dbReference type="Proteomes" id="UP000000586">
    <property type="component" value="Chromosome"/>
</dbReference>
<dbReference type="GO" id="GO:0005737">
    <property type="term" value="C:cytoplasm"/>
    <property type="evidence" value="ECO:0007669"/>
    <property type="project" value="UniProtKB-SubCell"/>
</dbReference>
<dbReference type="GO" id="GO:0004177">
    <property type="term" value="F:aminopeptidase activity"/>
    <property type="evidence" value="ECO:0007669"/>
    <property type="project" value="UniProtKB-KW"/>
</dbReference>
<dbReference type="GO" id="GO:0008239">
    <property type="term" value="F:dipeptidyl-peptidase activity"/>
    <property type="evidence" value="ECO:0007669"/>
    <property type="project" value="UniProtKB-UniRule"/>
</dbReference>
<dbReference type="GO" id="GO:0008236">
    <property type="term" value="F:serine-type peptidase activity"/>
    <property type="evidence" value="ECO:0007669"/>
    <property type="project" value="UniProtKB-KW"/>
</dbReference>
<dbReference type="GO" id="GO:0006508">
    <property type="term" value="P:proteolysis"/>
    <property type="evidence" value="ECO:0007669"/>
    <property type="project" value="UniProtKB-KW"/>
</dbReference>
<dbReference type="Gene3D" id="1.10.246.70">
    <property type="match status" value="1"/>
</dbReference>
<dbReference type="Gene3D" id="3.40.50.1820">
    <property type="entry name" value="alpha/beta hydrolase"/>
    <property type="match status" value="1"/>
</dbReference>
<dbReference type="Gene3D" id="2.60.120.260">
    <property type="entry name" value="Galactose-binding domain-like"/>
    <property type="match status" value="1"/>
</dbReference>
<dbReference type="HAMAP" id="MF_00698">
    <property type="entry name" value="Aminopeptidase_S15"/>
    <property type="match status" value="1"/>
</dbReference>
<dbReference type="InterPro" id="IPR029058">
    <property type="entry name" value="AB_hydrolase_fold"/>
</dbReference>
<dbReference type="InterPro" id="IPR008979">
    <property type="entry name" value="Galactose-bd-like_sf"/>
</dbReference>
<dbReference type="InterPro" id="IPR008252">
    <property type="entry name" value="Pept_S15_Xpro"/>
</dbReference>
<dbReference type="InterPro" id="IPR015251">
    <property type="entry name" value="PepX_N_dom"/>
</dbReference>
<dbReference type="InterPro" id="IPR036313">
    <property type="entry name" value="PepX_N_dom_sf"/>
</dbReference>
<dbReference type="InterPro" id="IPR000383">
    <property type="entry name" value="Xaa-Pro-like_dom"/>
</dbReference>
<dbReference type="InterPro" id="IPR013736">
    <property type="entry name" value="Xaa-Pro_dipept_C"/>
</dbReference>
<dbReference type="InterPro" id="IPR050585">
    <property type="entry name" value="Xaa-Pro_dipeptidyl-ppase/CocE"/>
</dbReference>
<dbReference type="NCBIfam" id="NF003783">
    <property type="entry name" value="PRK05371.1-4"/>
    <property type="match status" value="1"/>
</dbReference>
<dbReference type="PANTHER" id="PTHR43056:SF10">
    <property type="entry name" value="COCE_NOND FAMILY, PUTATIVE (AFU_ORTHOLOGUE AFUA_7G00600)-RELATED"/>
    <property type="match status" value="1"/>
</dbReference>
<dbReference type="PANTHER" id="PTHR43056">
    <property type="entry name" value="PEPTIDASE S9 PROLYL OLIGOPEPTIDASE"/>
    <property type="match status" value="1"/>
</dbReference>
<dbReference type="Pfam" id="PF02129">
    <property type="entry name" value="Peptidase_S15"/>
    <property type="match status" value="1"/>
</dbReference>
<dbReference type="Pfam" id="PF08530">
    <property type="entry name" value="PepX_C"/>
    <property type="match status" value="1"/>
</dbReference>
<dbReference type="Pfam" id="PF09168">
    <property type="entry name" value="PepX_N"/>
    <property type="match status" value="1"/>
</dbReference>
<dbReference type="PRINTS" id="PR00923">
    <property type="entry name" value="LACTOPTASE"/>
</dbReference>
<dbReference type="SMART" id="SM00939">
    <property type="entry name" value="PepX_C"/>
    <property type="match status" value="1"/>
</dbReference>
<dbReference type="SMART" id="SM00940">
    <property type="entry name" value="PepX_N"/>
    <property type="match status" value="1"/>
</dbReference>
<dbReference type="SUPFAM" id="SSF53474">
    <property type="entry name" value="alpha/beta-Hydrolases"/>
    <property type="match status" value="1"/>
</dbReference>
<dbReference type="SUPFAM" id="SSF49785">
    <property type="entry name" value="Galactose-binding domain-like"/>
    <property type="match status" value="1"/>
</dbReference>
<dbReference type="SUPFAM" id="SSF81761">
    <property type="entry name" value="X-Prolyl dipeptidyl aminopeptidase PepX, N-terminal domain"/>
    <property type="match status" value="1"/>
</dbReference>
<protein>
    <recommendedName>
        <fullName evidence="1">Xaa-Pro dipeptidyl-peptidase</fullName>
        <ecNumber evidence="1">3.4.14.11</ecNumber>
    </recommendedName>
    <alternativeName>
        <fullName evidence="1">X-Pro dipeptidyl-peptidase</fullName>
    </alternativeName>
    <alternativeName>
        <fullName evidence="1">X-prolyl-dipeptidyl aminopeptidase</fullName>
        <shortName evidence="1">X-PDAP</shortName>
    </alternativeName>
</protein>
<evidence type="ECO:0000255" key="1">
    <source>
        <dbReference type="HAMAP-Rule" id="MF_00698"/>
    </source>
</evidence>
<evidence type="ECO:0000305" key="2"/>
<feature type="chain" id="PRO_0000220230" description="Xaa-Pro dipeptidyl-peptidase">
    <location>
        <begin position="1"/>
        <end position="757"/>
    </location>
</feature>
<feature type="active site" description="Charge relay system" evidence="1">
    <location>
        <position position="348"/>
    </location>
</feature>
<feature type="active site" description="Charge relay system" evidence="1">
    <location>
        <position position="468"/>
    </location>
</feature>
<feature type="active site" description="Charge relay system" evidence="1">
    <location>
        <position position="498"/>
    </location>
</feature>
<proteinExistence type="inferred from homology"/>
<keyword id="KW-0031">Aminopeptidase</keyword>
<keyword id="KW-0963">Cytoplasm</keyword>
<keyword id="KW-0378">Hydrolase</keyword>
<keyword id="KW-0645">Protease</keyword>
<keyword id="KW-1185">Reference proteome</keyword>
<keyword id="KW-0720">Serine protease</keyword>
<accession>Q8DQ87</accession>
<comment type="function">
    <text evidence="1">Removes N-terminal dipeptides sequentially from polypeptides having unsubstituted N-termini provided that the penultimate residue is proline.</text>
</comment>
<comment type="catalytic activity">
    <reaction evidence="1">
        <text>Hydrolyzes Xaa-Pro-|- bonds to release unblocked, N-terminal dipeptides from substrates including Ala-Pro-|-p-nitroanilide and (sequentially) Tyr-Pro-|-Phe-Pro-|-Gly-Pro-|-Ile.</text>
        <dbReference type="EC" id="3.4.14.11"/>
    </reaction>
</comment>
<comment type="subunit">
    <text evidence="1">Homodimer.</text>
</comment>
<comment type="subcellular location">
    <subcellularLocation>
        <location evidence="1">Cytoplasm</location>
    </subcellularLocation>
</comment>
<comment type="similarity">
    <text evidence="1">Belongs to the peptidase S15 family.</text>
</comment>
<comment type="sequence caution" evidence="2">
    <conflict type="erroneous initiation">
        <sequence resource="EMBL-CDS" id="AAK99598"/>
    </conflict>
</comment>
<gene>
    <name evidence="1" type="primary">pepX</name>
    <name type="synonym">pepXP</name>
    <name type="ordered locus">spr0794</name>
</gene>
<reference key="1">
    <citation type="journal article" date="2001" name="J. Bacteriol.">
        <title>Genome of the bacterium Streptococcus pneumoniae strain R6.</title>
        <authorList>
            <person name="Hoskins J."/>
            <person name="Alborn W.E. Jr."/>
            <person name="Arnold J."/>
            <person name="Blaszczak L.C."/>
            <person name="Burgett S."/>
            <person name="DeHoff B.S."/>
            <person name="Estrem S.T."/>
            <person name="Fritz L."/>
            <person name="Fu D.-J."/>
            <person name="Fuller W."/>
            <person name="Geringer C."/>
            <person name="Gilmour R."/>
            <person name="Glass J.S."/>
            <person name="Khoja H."/>
            <person name="Kraft A.R."/>
            <person name="Lagace R.E."/>
            <person name="LeBlanc D.J."/>
            <person name="Lee L.N."/>
            <person name="Lefkowitz E.J."/>
            <person name="Lu J."/>
            <person name="Matsushima P."/>
            <person name="McAhren S.M."/>
            <person name="McHenney M."/>
            <person name="McLeaster K."/>
            <person name="Mundy C.W."/>
            <person name="Nicas T.I."/>
            <person name="Norris F.H."/>
            <person name="O'Gara M."/>
            <person name="Peery R.B."/>
            <person name="Robertson G.T."/>
            <person name="Rockey P."/>
            <person name="Sun P.-M."/>
            <person name="Winkler M.E."/>
            <person name="Yang Y."/>
            <person name="Young-Bellido M."/>
            <person name="Zhao G."/>
            <person name="Zook C.A."/>
            <person name="Baltz R.H."/>
            <person name="Jaskunas S.R."/>
            <person name="Rosteck P.R. Jr."/>
            <person name="Skatrud P.L."/>
            <person name="Glass J.I."/>
        </authorList>
    </citation>
    <scope>NUCLEOTIDE SEQUENCE [LARGE SCALE GENOMIC DNA]</scope>
    <source>
        <strain>ATCC BAA-255 / R6</strain>
    </source>
</reference>